<name>FABZ_METCA</name>
<keyword id="KW-0963">Cytoplasm</keyword>
<keyword id="KW-0441">Lipid A biosynthesis</keyword>
<keyword id="KW-0444">Lipid biosynthesis</keyword>
<keyword id="KW-0443">Lipid metabolism</keyword>
<keyword id="KW-0456">Lyase</keyword>
<keyword id="KW-1185">Reference proteome</keyword>
<protein>
    <recommendedName>
        <fullName evidence="1">3-hydroxyacyl-[acyl-carrier-protein] dehydratase FabZ</fullName>
        <ecNumber evidence="1">4.2.1.59</ecNumber>
    </recommendedName>
    <alternativeName>
        <fullName evidence="1">(3R)-hydroxymyristoyl-[acyl-carrier-protein] dehydratase</fullName>
        <shortName evidence="1">(3R)-hydroxymyristoyl-ACP dehydrase</shortName>
    </alternativeName>
    <alternativeName>
        <fullName evidence="1">Beta-hydroxyacyl-ACP dehydratase</fullName>
    </alternativeName>
</protein>
<gene>
    <name evidence="1" type="primary">fabZ</name>
    <name type="ordered locus">MCA2445</name>
</gene>
<evidence type="ECO:0000255" key="1">
    <source>
        <dbReference type="HAMAP-Rule" id="MF_00406"/>
    </source>
</evidence>
<comment type="function">
    <text evidence="1">Involved in unsaturated fatty acids biosynthesis. Catalyzes the dehydration of short chain beta-hydroxyacyl-ACPs and long chain saturated and unsaturated beta-hydroxyacyl-ACPs.</text>
</comment>
<comment type="catalytic activity">
    <reaction evidence="1">
        <text>a (3R)-hydroxyacyl-[ACP] = a (2E)-enoyl-[ACP] + H2O</text>
        <dbReference type="Rhea" id="RHEA:13097"/>
        <dbReference type="Rhea" id="RHEA-COMP:9925"/>
        <dbReference type="Rhea" id="RHEA-COMP:9945"/>
        <dbReference type="ChEBI" id="CHEBI:15377"/>
        <dbReference type="ChEBI" id="CHEBI:78784"/>
        <dbReference type="ChEBI" id="CHEBI:78827"/>
        <dbReference type="EC" id="4.2.1.59"/>
    </reaction>
</comment>
<comment type="subcellular location">
    <subcellularLocation>
        <location evidence="1">Cytoplasm</location>
    </subcellularLocation>
</comment>
<comment type="similarity">
    <text evidence="1">Belongs to the thioester dehydratase family. FabZ subfamily.</text>
</comment>
<proteinExistence type="inferred from homology"/>
<sequence>MDIQAIKEFLPHRYPFLLVDRVLECEPGKRLLAIKNVTYNEPFFQGHFPRVPIMPGVLIIEALAQTTGLLASETAPDVLGKGATYYLVGLDKVRFKRPVVPGDQLRLEATYLRHKRNIWAFACRADVEGEFVASAEIMCAAAEQGS</sequence>
<dbReference type="EC" id="4.2.1.59" evidence="1"/>
<dbReference type="EMBL" id="AE017282">
    <property type="protein sequence ID" value="AAU91437.1"/>
    <property type="molecule type" value="Genomic_DNA"/>
</dbReference>
<dbReference type="RefSeq" id="WP_010961670.1">
    <property type="nucleotide sequence ID" value="NC_002977.6"/>
</dbReference>
<dbReference type="SMR" id="Q604U1"/>
<dbReference type="STRING" id="243233.MCA2445"/>
<dbReference type="GeneID" id="88224646"/>
<dbReference type="KEGG" id="mca:MCA2445"/>
<dbReference type="eggNOG" id="COG0764">
    <property type="taxonomic scope" value="Bacteria"/>
</dbReference>
<dbReference type="HOGENOM" id="CLU_078912_1_0_6"/>
<dbReference type="Proteomes" id="UP000006821">
    <property type="component" value="Chromosome"/>
</dbReference>
<dbReference type="GO" id="GO:0005737">
    <property type="term" value="C:cytoplasm"/>
    <property type="evidence" value="ECO:0007669"/>
    <property type="project" value="UniProtKB-SubCell"/>
</dbReference>
<dbReference type="GO" id="GO:0016020">
    <property type="term" value="C:membrane"/>
    <property type="evidence" value="ECO:0007669"/>
    <property type="project" value="GOC"/>
</dbReference>
<dbReference type="GO" id="GO:0019171">
    <property type="term" value="F:(3R)-hydroxyacyl-[acyl-carrier-protein] dehydratase activity"/>
    <property type="evidence" value="ECO:0007669"/>
    <property type="project" value="UniProtKB-EC"/>
</dbReference>
<dbReference type="GO" id="GO:0006633">
    <property type="term" value="P:fatty acid biosynthetic process"/>
    <property type="evidence" value="ECO:0007669"/>
    <property type="project" value="UniProtKB-UniRule"/>
</dbReference>
<dbReference type="GO" id="GO:0009245">
    <property type="term" value="P:lipid A biosynthetic process"/>
    <property type="evidence" value="ECO:0007669"/>
    <property type="project" value="UniProtKB-UniRule"/>
</dbReference>
<dbReference type="CDD" id="cd01288">
    <property type="entry name" value="FabZ"/>
    <property type="match status" value="1"/>
</dbReference>
<dbReference type="FunFam" id="3.10.129.10:FF:000001">
    <property type="entry name" value="3-hydroxyacyl-[acyl-carrier-protein] dehydratase FabZ"/>
    <property type="match status" value="1"/>
</dbReference>
<dbReference type="Gene3D" id="3.10.129.10">
    <property type="entry name" value="Hotdog Thioesterase"/>
    <property type="match status" value="1"/>
</dbReference>
<dbReference type="HAMAP" id="MF_00406">
    <property type="entry name" value="FabZ"/>
    <property type="match status" value="1"/>
</dbReference>
<dbReference type="InterPro" id="IPR013114">
    <property type="entry name" value="FabA_FabZ"/>
</dbReference>
<dbReference type="InterPro" id="IPR010084">
    <property type="entry name" value="FabZ"/>
</dbReference>
<dbReference type="InterPro" id="IPR029069">
    <property type="entry name" value="HotDog_dom_sf"/>
</dbReference>
<dbReference type="NCBIfam" id="TIGR01750">
    <property type="entry name" value="fabZ"/>
    <property type="match status" value="1"/>
</dbReference>
<dbReference type="NCBIfam" id="NF000582">
    <property type="entry name" value="PRK00006.1"/>
    <property type="match status" value="1"/>
</dbReference>
<dbReference type="PANTHER" id="PTHR30272">
    <property type="entry name" value="3-HYDROXYACYL-[ACYL-CARRIER-PROTEIN] DEHYDRATASE"/>
    <property type="match status" value="1"/>
</dbReference>
<dbReference type="PANTHER" id="PTHR30272:SF1">
    <property type="entry name" value="3-HYDROXYACYL-[ACYL-CARRIER-PROTEIN] DEHYDRATASE"/>
    <property type="match status" value="1"/>
</dbReference>
<dbReference type="Pfam" id="PF07977">
    <property type="entry name" value="FabA"/>
    <property type="match status" value="1"/>
</dbReference>
<dbReference type="SUPFAM" id="SSF54637">
    <property type="entry name" value="Thioesterase/thiol ester dehydrase-isomerase"/>
    <property type="match status" value="1"/>
</dbReference>
<reference key="1">
    <citation type="journal article" date="2004" name="PLoS Biol.">
        <title>Genomic insights into methanotrophy: the complete genome sequence of Methylococcus capsulatus (Bath).</title>
        <authorList>
            <person name="Ward N.L."/>
            <person name="Larsen O."/>
            <person name="Sakwa J."/>
            <person name="Bruseth L."/>
            <person name="Khouri H.M."/>
            <person name="Durkin A.S."/>
            <person name="Dimitrov G."/>
            <person name="Jiang L."/>
            <person name="Scanlan D."/>
            <person name="Kang K.H."/>
            <person name="Lewis M.R."/>
            <person name="Nelson K.E."/>
            <person name="Methe B.A."/>
            <person name="Wu M."/>
            <person name="Heidelberg J.F."/>
            <person name="Paulsen I.T."/>
            <person name="Fouts D.E."/>
            <person name="Ravel J."/>
            <person name="Tettelin H."/>
            <person name="Ren Q."/>
            <person name="Read T.D."/>
            <person name="DeBoy R.T."/>
            <person name="Seshadri R."/>
            <person name="Salzberg S.L."/>
            <person name="Jensen H.B."/>
            <person name="Birkeland N.K."/>
            <person name="Nelson W.C."/>
            <person name="Dodson R.J."/>
            <person name="Grindhaug S.H."/>
            <person name="Holt I.E."/>
            <person name="Eidhammer I."/>
            <person name="Jonasen I."/>
            <person name="Vanaken S."/>
            <person name="Utterback T.R."/>
            <person name="Feldblyum T.V."/>
            <person name="Fraser C.M."/>
            <person name="Lillehaug J.R."/>
            <person name="Eisen J.A."/>
        </authorList>
    </citation>
    <scope>NUCLEOTIDE SEQUENCE [LARGE SCALE GENOMIC DNA]</scope>
    <source>
        <strain>ATCC 33009 / NCIMB 11132 / Bath</strain>
    </source>
</reference>
<feature type="chain" id="PRO_0000091701" description="3-hydroxyacyl-[acyl-carrier-protein] dehydratase FabZ">
    <location>
        <begin position="1"/>
        <end position="146"/>
    </location>
</feature>
<feature type="active site" evidence="1">
    <location>
        <position position="47"/>
    </location>
</feature>
<organism>
    <name type="scientific">Methylococcus capsulatus (strain ATCC 33009 / NCIMB 11132 / Bath)</name>
    <dbReference type="NCBI Taxonomy" id="243233"/>
    <lineage>
        <taxon>Bacteria</taxon>
        <taxon>Pseudomonadati</taxon>
        <taxon>Pseudomonadota</taxon>
        <taxon>Gammaproteobacteria</taxon>
        <taxon>Methylococcales</taxon>
        <taxon>Methylococcaceae</taxon>
        <taxon>Methylococcus</taxon>
    </lineage>
</organism>
<accession>Q604U1</accession>